<comment type="subcellular location">
    <subcellularLocation>
        <location evidence="4">Cell membrane</location>
        <topology evidence="4">Lipid-anchor</topology>
        <orientation evidence="4">Cytoplasmic side</orientation>
    </subcellularLocation>
</comment>
<comment type="similarity">
    <text evidence="4">Belongs to the small GTPase superfamily. Rho family.</text>
</comment>
<proteinExistence type="inferred from homology"/>
<sequence>MKKEVKIVTVGDGLIGKTTLLMTYYTNEFNTRVYSSFDSEYLNPLTVIINDDVIEISLWENDGFDSDGVYKESPPFIKYQPNHINVFLLLFSISDRDSFNNCLTKWNFEIKQNYPSIPVVLCGIKTDLREEENLVYKNSIDNSHFISFSEGVNMANEIDAVGYYECSSLKKKGLSELFDVLAIVGYSNILTKKKDKIKFKNNNNNNNYNENNQNISDTENNDNNNNNNNNNNNNNNNNNNNNNNNNNNNNNNNNNENNNNSYKNHNNKTTNKCKIS</sequence>
<keyword id="KW-1003">Cell membrane</keyword>
<keyword id="KW-0342">GTP-binding</keyword>
<keyword id="KW-0449">Lipoprotein</keyword>
<keyword id="KW-0472">Membrane</keyword>
<keyword id="KW-0488">Methylation</keyword>
<keyword id="KW-0547">Nucleotide-binding</keyword>
<keyword id="KW-0636">Prenylation</keyword>
<keyword id="KW-1185">Reference proteome</keyword>
<name>RACO_DICDI</name>
<accession>Q54Z85</accession>
<organism>
    <name type="scientific">Dictyostelium discoideum</name>
    <name type="common">Social amoeba</name>
    <dbReference type="NCBI Taxonomy" id="44689"/>
    <lineage>
        <taxon>Eukaryota</taxon>
        <taxon>Amoebozoa</taxon>
        <taxon>Evosea</taxon>
        <taxon>Eumycetozoa</taxon>
        <taxon>Dictyostelia</taxon>
        <taxon>Dictyosteliales</taxon>
        <taxon>Dictyosteliaceae</taxon>
        <taxon>Dictyostelium</taxon>
    </lineage>
</organism>
<protein>
    <recommendedName>
        <fullName>Rho-related protein racO</fullName>
    </recommendedName>
</protein>
<evidence type="ECO:0000250" key="1"/>
<evidence type="ECO:0000255" key="2"/>
<evidence type="ECO:0000256" key="3">
    <source>
        <dbReference type="SAM" id="MobiDB-lite"/>
    </source>
</evidence>
<evidence type="ECO:0000305" key="4"/>
<dbReference type="EMBL" id="AAFI02000022">
    <property type="protein sequence ID" value="EAL68569.1"/>
    <property type="molecule type" value="Genomic_DNA"/>
</dbReference>
<dbReference type="RefSeq" id="XP_642468.1">
    <property type="nucleotide sequence ID" value="XM_637376.1"/>
</dbReference>
<dbReference type="SMR" id="Q54Z85"/>
<dbReference type="FunCoup" id="Q54Z85">
    <property type="interactions" value="21"/>
</dbReference>
<dbReference type="STRING" id="44689.Q54Z85"/>
<dbReference type="PaxDb" id="44689-DDB0230035"/>
<dbReference type="EnsemblProtists" id="EAL68569">
    <property type="protein sequence ID" value="EAL68569"/>
    <property type="gene ID" value="DDB_G0277791"/>
</dbReference>
<dbReference type="GeneID" id="8621179"/>
<dbReference type="KEGG" id="ddi:DDB_G0277791"/>
<dbReference type="dictyBase" id="DDB_G0277791">
    <property type="gene designation" value="racO"/>
</dbReference>
<dbReference type="VEuPathDB" id="AmoebaDB:DDB_G0277791"/>
<dbReference type="eggNOG" id="KOG0393">
    <property type="taxonomic scope" value="Eukaryota"/>
</dbReference>
<dbReference type="HOGENOM" id="CLU_1009820_0_0_1"/>
<dbReference type="InParanoid" id="Q54Z85"/>
<dbReference type="PhylomeDB" id="Q54Z85"/>
<dbReference type="Reactome" id="R-DDI-6798695">
    <property type="pathway name" value="Neutrophil degranulation"/>
</dbReference>
<dbReference type="Reactome" id="R-DDI-9013404">
    <property type="pathway name" value="RAC2 GTPase cycle"/>
</dbReference>
<dbReference type="Reactome" id="R-DDI-9013407">
    <property type="pathway name" value="RHOH GTPase cycle"/>
</dbReference>
<dbReference type="Reactome" id="R-DDI-9013408">
    <property type="pathway name" value="RHOG GTPase cycle"/>
</dbReference>
<dbReference type="Reactome" id="R-DDI-9013418">
    <property type="pathway name" value="RHOBTB2 GTPase cycle"/>
</dbReference>
<dbReference type="Reactome" id="R-DDI-9013422">
    <property type="pathway name" value="RHOBTB1 GTPase cycle"/>
</dbReference>
<dbReference type="PRO" id="PR:Q54Z85"/>
<dbReference type="Proteomes" id="UP000002195">
    <property type="component" value="Chromosome 2"/>
</dbReference>
<dbReference type="GO" id="GO:0042995">
    <property type="term" value="C:cell projection"/>
    <property type="evidence" value="ECO:0000318"/>
    <property type="project" value="GO_Central"/>
</dbReference>
<dbReference type="GO" id="GO:0031410">
    <property type="term" value="C:cytoplasmic vesicle"/>
    <property type="evidence" value="ECO:0000318"/>
    <property type="project" value="GO_Central"/>
</dbReference>
<dbReference type="GO" id="GO:0005856">
    <property type="term" value="C:cytoskeleton"/>
    <property type="evidence" value="ECO:0000318"/>
    <property type="project" value="GO_Central"/>
</dbReference>
<dbReference type="GO" id="GO:0005886">
    <property type="term" value="C:plasma membrane"/>
    <property type="evidence" value="ECO:0000318"/>
    <property type="project" value="GO_Central"/>
</dbReference>
<dbReference type="GO" id="GO:0005525">
    <property type="term" value="F:GTP binding"/>
    <property type="evidence" value="ECO:0000318"/>
    <property type="project" value="GO_Central"/>
</dbReference>
<dbReference type="GO" id="GO:0003924">
    <property type="term" value="F:GTPase activity"/>
    <property type="evidence" value="ECO:0000318"/>
    <property type="project" value="GO_Central"/>
</dbReference>
<dbReference type="GO" id="GO:0019901">
    <property type="term" value="F:protein kinase binding"/>
    <property type="evidence" value="ECO:0000318"/>
    <property type="project" value="GO_Central"/>
</dbReference>
<dbReference type="GO" id="GO:0007015">
    <property type="term" value="P:actin filament organization"/>
    <property type="evidence" value="ECO:0000318"/>
    <property type="project" value="GO_Central"/>
</dbReference>
<dbReference type="GO" id="GO:0030865">
    <property type="term" value="P:cortical cytoskeleton organization"/>
    <property type="evidence" value="ECO:0000318"/>
    <property type="project" value="GO_Central"/>
</dbReference>
<dbReference type="GO" id="GO:0007163">
    <property type="term" value="P:establishment or maintenance of cell polarity"/>
    <property type="evidence" value="ECO:0000318"/>
    <property type="project" value="GO_Central"/>
</dbReference>
<dbReference type="GO" id="GO:0000281">
    <property type="term" value="P:mitotic cytokinesis"/>
    <property type="evidence" value="ECO:0000318"/>
    <property type="project" value="GO_Central"/>
</dbReference>
<dbReference type="GO" id="GO:0032956">
    <property type="term" value="P:regulation of actin cytoskeleton organization"/>
    <property type="evidence" value="ECO:0000318"/>
    <property type="project" value="GO_Central"/>
</dbReference>
<dbReference type="GO" id="GO:0008360">
    <property type="term" value="P:regulation of cell shape"/>
    <property type="evidence" value="ECO:0000318"/>
    <property type="project" value="GO_Central"/>
</dbReference>
<dbReference type="GO" id="GO:0009617">
    <property type="term" value="P:response to bacterium"/>
    <property type="evidence" value="ECO:0007007"/>
    <property type="project" value="dictyBase"/>
</dbReference>
<dbReference type="GO" id="GO:0007165">
    <property type="term" value="P:signal transduction"/>
    <property type="evidence" value="ECO:0000318"/>
    <property type="project" value="GO_Central"/>
</dbReference>
<dbReference type="GO" id="GO:0007264">
    <property type="term" value="P:small GTPase-mediated signal transduction"/>
    <property type="evidence" value="ECO:0007669"/>
    <property type="project" value="InterPro"/>
</dbReference>
<dbReference type="CDD" id="cd00157">
    <property type="entry name" value="Rho"/>
    <property type="match status" value="1"/>
</dbReference>
<dbReference type="FunFam" id="3.40.50.300:FF:002060">
    <property type="entry name" value="Rho family GTPase"/>
    <property type="match status" value="1"/>
</dbReference>
<dbReference type="Gene3D" id="3.40.50.300">
    <property type="entry name" value="P-loop containing nucleotide triphosphate hydrolases"/>
    <property type="match status" value="1"/>
</dbReference>
<dbReference type="InterPro" id="IPR027417">
    <property type="entry name" value="P-loop_NTPase"/>
</dbReference>
<dbReference type="InterPro" id="IPR001806">
    <property type="entry name" value="Small_GTPase"/>
</dbReference>
<dbReference type="InterPro" id="IPR003578">
    <property type="entry name" value="Small_GTPase_Rho"/>
</dbReference>
<dbReference type="PANTHER" id="PTHR24072">
    <property type="entry name" value="RHO FAMILY GTPASE"/>
    <property type="match status" value="1"/>
</dbReference>
<dbReference type="Pfam" id="PF00071">
    <property type="entry name" value="Ras"/>
    <property type="match status" value="1"/>
</dbReference>
<dbReference type="PRINTS" id="PR00449">
    <property type="entry name" value="RASTRNSFRMNG"/>
</dbReference>
<dbReference type="SMART" id="SM00175">
    <property type="entry name" value="RAB"/>
    <property type="match status" value="1"/>
</dbReference>
<dbReference type="SMART" id="SM00173">
    <property type="entry name" value="RAS"/>
    <property type="match status" value="1"/>
</dbReference>
<dbReference type="SMART" id="SM00174">
    <property type="entry name" value="RHO"/>
    <property type="match status" value="1"/>
</dbReference>
<dbReference type="SUPFAM" id="SSF52540">
    <property type="entry name" value="P-loop containing nucleoside triphosphate hydrolases"/>
    <property type="match status" value="1"/>
</dbReference>
<dbReference type="PROSITE" id="PS51420">
    <property type="entry name" value="RHO"/>
    <property type="match status" value="1"/>
</dbReference>
<feature type="chain" id="PRO_0000312521" description="Rho-related protein racO">
    <location>
        <begin position="1"/>
        <end position="273"/>
    </location>
</feature>
<feature type="propeptide" id="PRO_0000312522" description="Removed in mature form" evidence="1">
    <location>
        <begin position="274"/>
        <end position="276"/>
    </location>
</feature>
<feature type="region of interest" description="Disordered" evidence="3">
    <location>
        <begin position="199"/>
        <end position="276"/>
    </location>
</feature>
<feature type="short sequence motif" description="Effector region" evidence="2">
    <location>
        <begin position="34"/>
        <end position="42"/>
    </location>
</feature>
<feature type="compositionally biased region" description="Low complexity" evidence="3">
    <location>
        <begin position="200"/>
        <end position="270"/>
    </location>
</feature>
<feature type="binding site" evidence="1">
    <location>
        <begin position="11"/>
        <end position="18"/>
    </location>
    <ligand>
        <name>GTP</name>
        <dbReference type="ChEBI" id="CHEBI:37565"/>
    </ligand>
</feature>
<feature type="binding site" evidence="1">
    <location>
        <begin position="60"/>
        <end position="64"/>
    </location>
    <ligand>
        <name>GTP</name>
        <dbReference type="ChEBI" id="CHEBI:37565"/>
    </ligand>
</feature>
<feature type="binding site" evidence="1">
    <location>
        <begin position="124"/>
        <end position="127"/>
    </location>
    <ligand>
        <name>GTP</name>
        <dbReference type="ChEBI" id="CHEBI:37565"/>
    </ligand>
</feature>
<feature type="modified residue" description="Cysteine methyl ester" evidence="1">
    <location>
        <position position="273"/>
    </location>
</feature>
<feature type="lipid moiety-binding region" description="S-geranylgeranyl cysteine" evidence="1">
    <location>
        <position position="273"/>
    </location>
</feature>
<gene>
    <name type="primary">racO</name>
    <name type="ORF">DDB_G0277791</name>
</gene>
<reference key="1">
    <citation type="journal article" date="2002" name="Nature">
        <title>Sequence and analysis of chromosome 2 of Dictyostelium discoideum.</title>
        <authorList>
            <person name="Gloeckner G."/>
            <person name="Eichinger L."/>
            <person name="Szafranski K."/>
            <person name="Pachebat J.A."/>
            <person name="Bankier A.T."/>
            <person name="Dear P.H."/>
            <person name="Lehmann R."/>
            <person name="Baumgart C."/>
            <person name="Parra G."/>
            <person name="Abril J.F."/>
            <person name="Guigo R."/>
            <person name="Kumpf K."/>
            <person name="Tunggal B."/>
            <person name="Cox E.C."/>
            <person name="Quail M.A."/>
            <person name="Platzer M."/>
            <person name="Rosenthal A."/>
            <person name="Noegel A.A."/>
        </authorList>
    </citation>
    <scope>NUCLEOTIDE SEQUENCE [LARGE SCALE GENOMIC DNA]</scope>
    <source>
        <strain>AX4</strain>
    </source>
</reference>
<reference key="2">
    <citation type="journal article" date="2005" name="Nature">
        <title>The genome of the social amoeba Dictyostelium discoideum.</title>
        <authorList>
            <person name="Eichinger L."/>
            <person name="Pachebat J.A."/>
            <person name="Gloeckner G."/>
            <person name="Rajandream M.A."/>
            <person name="Sucgang R."/>
            <person name="Berriman M."/>
            <person name="Song J."/>
            <person name="Olsen R."/>
            <person name="Szafranski K."/>
            <person name="Xu Q."/>
            <person name="Tunggal B."/>
            <person name="Kummerfeld S."/>
            <person name="Madera M."/>
            <person name="Konfortov B.A."/>
            <person name="Rivero F."/>
            <person name="Bankier A.T."/>
            <person name="Lehmann R."/>
            <person name="Hamlin N."/>
            <person name="Davies R."/>
            <person name="Gaudet P."/>
            <person name="Fey P."/>
            <person name="Pilcher K."/>
            <person name="Chen G."/>
            <person name="Saunders D."/>
            <person name="Sodergren E.J."/>
            <person name="Davis P."/>
            <person name="Kerhornou A."/>
            <person name="Nie X."/>
            <person name="Hall N."/>
            <person name="Anjard C."/>
            <person name="Hemphill L."/>
            <person name="Bason N."/>
            <person name="Farbrother P."/>
            <person name="Desany B."/>
            <person name="Just E."/>
            <person name="Morio T."/>
            <person name="Rost R."/>
            <person name="Churcher C.M."/>
            <person name="Cooper J."/>
            <person name="Haydock S."/>
            <person name="van Driessche N."/>
            <person name="Cronin A."/>
            <person name="Goodhead I."/>
            <person name="Muzny D.M."/>
            <person name="Mourier T."/>
            <person name="Pain A."/>
            <person name="Lu M."/>
            <person name="Harper D."/>
            <person name="Lindsay R."/>
            <person name="Hauser H."/>
            <person name="James K.D."/>
            <person name="Quiles M."/>
            <person name="Madan Babu M."/>
            <person name="Saito T."/>
            <person name="Buchrieser C."/>
            <person name="Wardroper A."/>
            <person name="Felder M."/>
            <person name="Thangavelu M."/>
            <person name="Johnson D."/>
            <person name="Knights A."/>
            <person name="Loulseged H."/>
            <person name="Mungall K.L."/>
            <person name="Oliver K."/>
            <person name="Price C."/>
            <person name="Quail M.A."/>
            <person name="Urushihara H."/>
            <person name="Hernandez J."/>
            <person name="Rabbinowitsch E."/>
            <person name="Steffen D."/>
            <person name="Sanders M."/>
            <person name="Ma J."/>
            <person name="Kohara Y."/>
            <person name="Sharp S."/>
            <person name="Simmonds M.N."/>
            <person name="Spiegler S."/>
            <person name="Tivey A."/>
            <person name="Sugano S."/>
            <person name="White B."/>
            <person name="Walker D."/>
            <person name="Woodward J.R."/>
            <person name="Winckler T."/>
            <person name="Tanaka Y."/>
            <person name="Shaulsky G."/>
            <person name="Schleicher M."/>
            <person name="Weinstock G.M."/>
            <person name="Rosenthal A."/>
            <person name="Cox E.C."/>
            <person name="Chisholm R.L."/>
            <person name="Gibbs R.A."/>
            <person name="Loomis W.F."/>
            <person name="Platzer M."/>
            <person name="Kay R.R."/>
            <person name="Williams J.G."/>
            <person name="Dear P.H."/>
            <person name="Noegel A.A."/>
            <person name="Barrell B.G."/>
            <person name="Kuspa A."/>
        </authorList>
    </citation>
    <scope>NUCLEOTIDE SEQUENCE [LARGE SCALE GENOMIC DNA]</scope>
    <source>
        <strain>AX4</strain>
    </source>
</reference>